<keyword id="KW-0067">ATP-binding</keyword>
<keyword id="KW-0436">Ligase</keyword>
<keyword id="KW-0479">Metal-binding</keyword>
<keyword id="KW-0547">Nucleotide-binding</keyword>
<keyword id="KW-0862">Zinc</keyword>
<evidence type="ECO:0000255" key="1">
    <source>
        <dbReference type="HAMAP-Rule" id="MF_01697"/>
    </source>
</evidence>
<evidence type="ECO:0000256" key="2">
    <source>
        <dbReference type="SAM" id="MobiDB-lite"/>
    </source>
</evidence>
<organism>
    <name type="scientific">Mycolicibacterium gilvum (strain PYR-GCK)</name>
    <name type="common">Mycobacterium gilvum (strain PYR-GCK)</name>
    <dbReference type="NCBI Taxonomy" id="350054"/>
    <lineage>
        <taxon>Bacteria</taxon>
        <taxon>Bacillati</taxon>
        <taxon>Actinomycetota</taxon>
        <taxon>Actinomycetes</taxon>
        <taxon>Mycobacteriales</taxon>
        <taxon>Mycobacteriaceae</taxon>
        <taxon>Mycolicibacterium</taxon>
    </lineage>
</organism>
<accession>A4TB85</accession>
<proteinExistence type="inferred from homology"/>
<comment type="function">
    <text evidence="1">Catalyzes the ATP-dependent condensation of GlcN-Ins and L-cysteine to form L-Cys-GlcN-Ins.</text>
</comment>
<comment type="catalytic activity">
    <reaction evidence="1">
        <text>1D-myo-inositol 2-amino-2-deoxy-alpha-D-glucopyranoside + L-cysteine + ATP = 1D-myo-inositol 2-(L-cysteinylamino)-2-deoxy-alpha-D-glucopyranoside + AMP + diphosphate + H(+)</text>
        <dbReference type="Rhea" id="RHEA:26176"/>
        <dbReference type="ChEBI" id="CHEBI:15378"/>
        <dbReference type="ChEBI" id="CHEBI:30616"/>
        <dbReference type="ChEBI" id="CHEBI:33019"/>
        <dbReference type="ChEBI" id="CHEBI:35235"/>
        <dbReference type="ChEBI" id="CHEBI:58886"/>
        <dbReference type="ChEBI" id="CHEBI:58887"/>
        <dbReference type="ChEBI" id="CHEBI:456215"/>
        <dbReference type="EC" id="6.3.1.13"/>
    </reaction>
</comment>
<comment type="cofactor">
    <cofactor evidence="1">
        <name>Zn(2+)</name>
        <dbReference type="ChEBI" id="CHEBI:29105"/>
    </cofactor>
    <text evidence="1">Binds 1 zinc ion per subunit.</text>
</comment>
<comment type="subunit">
    <text evidence="1">Monomer.</text>
</comment>
<comment type="similarity">
    <text evidence="1">Belongs to the class-I aminoacyl-tRNA synthetase family. MshC subfamily.</text>
</comment>
<gene>
    <name evidence="1" type="primary">mshC</name>
    <name type="ordered locus">Mflv_3049</name>
</gene>
<feature type="chain" id="PRO_0000400460" description="L-cysteine:1D-myo-inositol 2-amino-2-deoxy-alpha-D-glucopyranoside ligase">
    <location>
        <begin position="1"/>
        <end position="444"/>
    </location>
</feature>
<feature type="region of interest" description="Disordered" evidence="2">
    <location>
        <begin position="1"/>
        <end position="21"/>
    </location>
</feature>
<feature type="short sequence motif" description="'HIGH' region" evidence="1">
    <location>
        <begin position="77"/>
        <end position="87"/>
    </location>
</feature>
<feature type="short sequence motif" description="'ERGGDP' region" evidence="1">
    <location>
        <begin position="219"/>
        <end position="224"/>
    </location>
</feature>
<feature type="short sequence motif" description="'KMSKS' region" evidence="1">
    <location>
        <begin position="321"/>
        <end position="325"/>
    </location>
</feature>
<feature type="compositionally biased region" description="Basic and acidic residues" evidence="2">
    <location>
        <begin position="1"/>
        <end position="13"/>
    </location>
</feature>
<feature type="binding site" evidence="1">
    <location>
        <begin position="75"/>
        <end position="78"/>
    </location>
    <ligand>
        <name>L-cysteinyl-5'-AMP</name>
        <dbReference type="ChEBI" id="CHEBI:144924"/>
    </ligand>
</feature>
<feature type="binding site" evidence="1">
    <location>
        <position position="75"/>
    </location>
    <ligand>
        <name>Zn(2+)</name>
        <dbReference type="ChEBI" id="CHEBI:29105"/>
    </ligand>
</feature>
<feature type="binding site" evidence="1">
    <location>
        <position position="90"/>
    </location>
    <ligand>
        <name>L-cysteinyl-5'-AMP</name>
        <dbReference type="ChEBI" id="CHEBI:144924"/>
    </ligand>
</feature>
<feature type="binding site" evidence="1">
    <location>
        <begin position="113"/>
        <end position="115"/>
    </location>
    <ligand>
        <name>L-cysteinyl-5'-AMP</name>
        <dbReference type="ChEBI" id="CHEBI:144924"/>
    </ligand>
</feature>
<feature type="binding site" evidence="1">
    <location>
        <position position="259"/>
    </location>
    <ligand>
        <name>L-cysteinyl-5'-AMP</name>
        <dbReference type="ChEBI" id="CHEBI:144924"/>
    </ligand>
</feature>
<feature type="binding site" evidence="1">
    <location>
        <position position="263"/>
    </location>
    <ligand>
        <name>Zn(2+)</name>
        <dbReference type="ChEBI" id="CHEBI:29105"/>
    </ligand>
</feature>
<feature type="binding site" evidence="1">
    <location>
        <begin position="281"/>
        <end position="283"/>
    </location>
    <ligand>
        <name>L-cysteinyl-5'-AMP</name>
        <dbReference type="ChEBI" id="CHEBI:144924"/>
    </ligand>
</feature>
<feature type="binding site" evidence="1">
    <location>
        <position position="288"/>
    </location>
    <ligand>
        <name>Zn(2+)</name>
        <dbReference type="ChEBI" id="CHEBI:29105"/>
    </ligand>
</feature>
<feature type="binding site" evidence="1">
    <location>
        <position position="315"/>
    </location>
    <ligand>
        <name>L-cysteinyl-5'-AMP</name>
        <dbReference type="ChEBI" id="CHEBI:144924"/>
    </ligand>
</feature>
<reference key="1">
    <citation type="submission" date="2007-04" db="EMBL/GenBank/DDBJ databases">
        <title>Complete sequence of chromosome of Mycobacterium gilvum PYR-GCK.</title>
        <authorList>
            <consortium name="US DOE Joint Genome Institute"/>
            <person name="Copeland A."/>
            <person name="Lucas S."/>
            <person name="Lapidus A."/>
            <person name="Barry K."/>
            <person name="Detter J.C."/>
            <person name="Glavina del Rio T."/>
            <person name="Hammon N."/>
            <person name="Israni S."/>
            <person name="Dalin E."/>
            <person name="Tice H."/>
            <person name="Pitluck S."/>
            <person name="Chain P."/>
            <person name="Malfatti S."/>
            <person name="Shin M."/>
            <person name="Vergez L."/>
            <person name="Schmutz J."/>
            <person name="Larimer F."/>
            <person name="Land M."/>
            <person name="Hauser L."/>
            <person name="Kyrpides N."/>
            <person name="Mikhailova N."/>
            <person name="Miller C."/>
            <person name="Richardson P."/>
        </authorList>
    </citation>
    <scope>NUCLEOTIDE SEQUENCE [LARGE SCALE GENOMIC DNA]</scope>
    <source>
        <strain>PYR-GCK</strain>
    </source>
</reference>
<dbReference type="EC" id="6.3.1.13" evidence="1"/>
<dbReference type="EMBL" id="CP000656">
    <property type="protein sequence ID" value="ABP45526.1"/>
    <property type="molecule type" value="Genomic_DNA"/>
</dbReference>
<dbReference type="SMR" id="A4TB85"/>
<dbReference type="STRING" id="350054.Mflv_3049"/>
<dbReference type="KEGG" id="mgi:Mflv_3049"/>
<dbReference type="eggNOG" id="COG0215">
    <property type="taxonomic scope" value="Bacteria"/>
</dbReference>
<dbReference type="HOGENOM" id="CLU_013528_0_0_11"/>
<dbReference type="GO" id="GO:0005829">
    <property type="term" value="C:cytosol"/>
    <property type="evidence" value="ECO:0007669"/>
    <property type="project" value="TreeGrafter"/>
</dbReference>
<dbReference type="GO" id="GO:0005524">
    <property type="term" value="F:ATP binding"/>
    <property type="evidence" value="ECO:0007669"/>
    <property type="project" value="UniProtKB-KW"/>
</dbReference>
<dbReference type="GO" id="GO:0035446">
    <property type="term" value="F:cysteine-glucosaminylinositol ligase activity"/>
    <property type="evidence" value="ECO:0007669"/>
    <property type="project" value="UniProtKB-UniRule"/>
</dbReference>
<dbReference type="GO" id="GO:0004817">
    <property type="term" value="F:cysteine-tRNA ligase activity"/>
    <property type="evidence" value="ECO:0007669"/>
    <property type="project" value="TreeGrafter"/>
</dbReference>
<dbReference type="GO" id="GO:0008270">
    <property type="term" value="F:zinc ion binding"/>
    <property type="evidence" value="ECO:0007669"/>
    <property type="project" value="UniProtKB-UniRule"/>
</dbReference>
<dbReference type="GO" id="GO:0006423">
    <property type="term" value="P:cysteinyl-tRNA aminoacylation"/>
    <property type="evidence" value="ECO:0007669"/>
    <property type="project" value="TreeGrafter"/>
</dbReference>
<dbReference type="GO" id="GO:0010125">
    <property type="term" value="P:mycothiol biosynthetic process"/>
    <property type="evidence" value="ECO:0007669"/>
    <property type="project" value="UniProtKB-UniRule"/>
</dbReference>
<dbReference type="CDD" id="cd00672">
    <property type="entry name" value="CysRS_core"/>
    <property type="match status" value="1"/>
</dbReference>
<dbReference type="FunFam" id="3.40.50.620:FF:000134">
    <property type="entry name" value="L-cysteine:1D-myo-inositol 2-amino-2-deoxy-alpha-D-glucopyranoside ligase"/>
    <property type="match status" value="1"/>
</dbReference>
<dbReference type="Gene3D" id="1.20.120.640">
    <property type="entry name" value="Anticodon-binding domain of a subclass of class I aminoacyl-tRNA synthetases"/>
    <property type="match status" value="1"/>
</dbReference>
<dbReference type="Gene3D" id="3.40.50.620">
    <property type="entry name" value="HUPs"/>
    <property type="match status" value="1"/>
</dbReference>
<dbReference type="HAMAP" id="MF_01697">
    <property type="entry name" value="MshC"/>
    <property type="match status" value="1"/>
</dbReference>
<dbReference type="InterPro" id="IPR024909">
    <property type="entry name" value="Cys-tRNA/MSH_ligase"/>
</dbReference>
<dbReference type="InterPro" id="IPR017812">
    <property type="entry name" value="Mycothiol_ligase_MshC"/>
</dbReference>
<dbReference type="InterPro" id="IPR014729">
    <property type="entry name" value="Rossmann-like_a/b/a_fold"/>
</dbReference>
<dbReference type="InterPro" id="IPR032678">
    <property type="entry name" value="tRNA-synt_1_cat_dom"/>
</dbReference>
<dbReference type="NCBIfam" id="TIGR03447">
    <property type="entry name" value="mycothiol_MshC"/>
    <property type="match status" value="1"/>
</dbReference>
<dbReference type="PANTHER" id="PTHR10890:SF3">
    <property type="entry name" value="CYSTEINE--TRNA LIGASE, CYTOPLASMIC"/>
    <property type="match status" value="1"/>
</dbReference>
<dbReference type="PANTHER" id="PTHR10890">
    <property type="entry name" value="CYSTEINYL-TRNA SYNTHETASE"/>
    <property type="match status" value="1"/>
</dbReference>
<dbReference type="Pfam" id="PF01406">
    <property type="entry name" value="tRNA-synt_1e"/>
    <property type="match status" value="1"/>
</dbReference>
<dbReference type="PRINTS" id="PR00983">
    <property type="entry name" value="TRNASYNTHCYS"/>
</dbReference>
<dbReference type="SUPFAM" id="SSF52374">
    <property type="entry name" value="Nucleotidylyl transferase"/>
    <property type="match status" value="1"/>
</dbReference>
<protein>
    <recommendedName>
        <fullName evidence="1">L-cysteine:1D-myo-inositol 2-amino-2-deoxy-alpha-D-glucopyranoside ligase</fullName>
        <shortName evidence="1">L-Cys:GlcN-Ins ligase</shortName>
        <ecNumber evidence="1">6.3.1.13</ecNumber>
    </recommendedName>
    <alternativeName>
        <fullName evidence="1">Mycothiol ligase</fullName>
        <shortName evidence="1">MSH ligase</shortName>
    </alternativeName>
</protein>
<sequence>MPCDRKTSPDQHHALQIHRHHHRRKIRARVDAMQSWSAPSVPALPGRGPQLRLFDSADRQIRPVSPGATATMYVCGITPYDATHLGHAATYLTFDLVNRVWRDSGHDVHYVQNITDVDDPLFERAARDGIGWRELGDRETDLFREDMAALRVVPPRDYVAATEAIAEVIEVVEKLLASGAAYVVDDAQYPDVYFHAGATVQFGYESGYDRETMLALFAERGGDPDRPGKSDPLDALLWRAERPEEPSWPSPFGPGRPGWHVECAAIAMTRIGNVLDIQGGGSDLIFPHHEFSSAHAECVSGERRFARHYVHAGMIGWDGHKMSKSRGNLVLVSQLRRDGVDPGAIRLGLFAGHYRQDRYWSPAVLDEAQQRLHRWRSATALDGAPDATDVVARVRRYLADDLDTPKALAAIDGWAEDTLSYGGHDRTAGPTVSAAVDALLGVAL</sequence>
<name>MSHC_MYCGI</name>